<reference key="1">
    <citation type="journal article" date="2005" name="Science">
        <title>Life at depth: Photobacterium profundum genome sequence and expression analysis.</title>
        <authorList>
            <person name="Vezzi A."/>
            <person name="Campanaro S."/>
            <person name="D'Angelo M."/>
            <person name="Simonato F."/>
            <person name="Vitulo N."/>
            <person name="Lauro F.M."/>
            <person name="Cestaro A."/>
            <person name="Malacrida G."/>
            <person name="Simionati B."/>
            <person name="Cannata N."/>
            <person name="Romualdi C."/>
            <person name="Bartlett D.H."/>
            <person name="Valle G."/>
        </authorList>
    </citation>
    <scope>NUCLEOTIDE SEQUENCE [LARGE SCALE GENOMIC DNA]</scope>
    <source>
        <strain>ATCC BAA-1253 / SS9</strain>
    </source>
</reference>
<organism>
    <name type="scientific">Photobacterium profundum (strain SS9)</name>
    <dbReference type="NCBI Taxonomy" id="298386"/>
    <lineage>
        <taxon>Bacteria</taxon>
        <taxon>Pseudomonadati</taxon>
        <taxon>Pseudomonadota</taxon>
        <taxon>Gammaproteobacteria</taxon>
        <taxon>Vibrionales</taxon>
        <taxon>Vibrionaceae</taxon>
        <taxon>Photobacterium</taxon>
    </lineage>
</organism>
<feature type="chain" id="PRO_0000189762" description="Gamma-glutamyl phosphate reductase">
    <location>
        <begin position="1"/>
        <end position="418"/>
    </location>
</feature>
<dbReference type="EC" id="1.2.1.41" evidence="1"/>
<dbReference type="EMBL" id="CR378665">
    <property type="protein sequence ID" value="CAG19253.1"/>
    <property type="molecule type" value="Genomic_DNA"/>
</dbReference>
<dbReference type="RefSeq" id="WP_011217590.1">
    <property type="nucleotide sequence ID" value="NC_006370.1"/>
</dbReference>
<dbReference type="SMR" id="Q6LTX2"/>
<dbReference type="STRING" id="298386.PBPRA0840"/>
<dbReference type="KEGG" id="ppr:PBPRA0840"/>
<dbReference type="eggNOG" id="COG0014">
    <property type="taxonomic scope" value="Bacteria"/>
</dbReference>
<dbReference type="HOGENOM" id="CLU_030231_0_0_6"/>
<dbReference type="UniPathway" id="UPA00098">
    <property type="reaction ID" value="UER00360"/>
</dbReference>
<dbReference type="Proteomes" id="UP000000593">
    <property type="component" value="Chromosome 1"/>
</dbReference>
<dbReference type="GO" id="GO:0005737">
    <property type="term" value="C:cytoplasm"/>
    <property type="evidence" value="ECO:0007669"/>
    <property type="project" value="UniProtKB-SubCell"/>
</dbReference>
<dbReference type="GO" id="GO:0004350">
    <property type="term" value="F:glutamate-5-semialdehyde dehydrogenase activity"/>
    <property type="evidence" value="ECO:0007669"/>
    <property type="project" value="UniProtKB-UniRule"/>
</dbReference>
<dbReference type="GO" id="GO:0050661">
    <property type="term" value="F:NADP binding"/>
    <property type="evidence" value="ECO:0007669"/>
    <property type="project" value="InterPro"/>
</dbReference>
<dbReference type="GO" id="GO:0055129">
    <property type="term" value="P:L-proline biosynthetic process"/>
    <property type="evidence" value="ECO:0007669"/>
    <property type="project" value="UniProtKB-UniRule"/>
</dbReference>
<dbReference type="CDD" id="cd07079">
    <property type="entry name" value="ALDH_F18-19_ProA-GPR"/>
    <property type="match status" value="1"/>
</dbReference>
<dbReference type="FunFam" id="3.40.309.10:FF:000028">
    <property type="entry name" value="Gamma-glutamyl phosphate reductase"/>
    <property type="match status" value="1"/>
</dbReference>
<dbReference type="Gene3D" id="3.40.605.10">
    <property type="entry name" value="Aldehyde Dehydrogenase, Chain A, domain 1"/>
    <property type="match status" value="1"/>
</dbReference>
<dbReference type="Gene3D" id="3.40.309.10">
    <property type="entry name" value="Aldehyde Dehydrogenase, Chain A, domain 2"/>
    <property type="match status" value="1"/>
</dbReference>
<dbReference type="HAMAP" id="MF_00412">
    <property type="entry name" value="ProA"/>
    <property type="match status" value="1"/>
</dbReference>
<dbReference type="InterPro" id="IPR016161">
    <property type="entry name" value="Ald_DH/histidinol_DH"/>
</dbReference>
<dbReference type="InterPro" id="IPR016163">
    <property type="entry name" value="Ald_DH_C"/>
</dbReference>
<dbReference type="InterPro" id="IPR016162">
    <property type="entry name" value="Ald_DH_N"/>
</dbReference>
<dbReference type="InterPro" id="IPR015590">
    <property type="entry name" value="Aldehyde_DH_dom"/>
</dbReference>
<dbReference type="InterPro" id="IPR020593">
    <property type="entry name" value="G-glutamylP_reductase_CS"/>
</dbReference>
<dbReference type="InterPro" id="IPR012134">
    <property type="entry name" value="Glu-5-SA_DH"/>
</dbReference>
<dbReference type="InterPro" id="IPR000965">
    <property type="entry name" value="GPR_dom"/>
</dbReference>
<dbReference type="NCBIfam" id="NF001221">
    <property type="entry name" value="PRK00197.1"/>
    <property type="match status" value="1"/>
</dbReference>
<dbReference type="NCBIfam" id="TIGR00407">
    <property type="entry name" value="proA"/>
    <property type="match status" value="1"/>
</dbReference>
<dbReference type="PANTHER" id="PTHR11063:SF8">
    <property type="entry name" value="DELTA-1-PYRROLINE-5-CARBOXYLATE SYNTHASE"/>
    <property type="match status" value="1"/>
</dbReference>
<dbReference type="PANTHER" id="PTHR11063">
    <property type="entry name" value="GLUTAMATE SEMIALDEHYDE DEHYDROGENASE"/>
    <property type="match status" value="1"/>
</dbReference>
<dbReference type="Pfam" id="PF00171">
    <property type="entry name" value="Aldedh"/>
    <property type="match status" value="1"/>
</dbReference>
<dbReference type="PIRSF" id="PIRSF000151">
    <property type="entry name" value="GPR"/>
    <property type="match status" value="1"/>
</dbReference>
<dbReference type="SUPFAM" id="SSF53720">
    <property type="entry name" value="ALDH-like"/>
    <property type="match status" value="1"/>
</dbReference>
<dbReference type="PROSITE" id="PS01223">
    <property type="entry name" value="PROA"/>
    <property type="match status" value="1"/>
</dbReference>
<protein>
    <recommendedName>
        <fullName evidence="1">Gamma-glutamyl phosphate reductase</fullName>
        <shortName evidence="1">GPR</shortName>
        <ecNumber evidence="1">1.2.1.41</ecNumber>
    </recommendedName>
    <alternativeName>
        <fullName evidence="1">Glutamate-5-semialdehyde dehydrogenase</fullName>
    </alternativeName>
    <alternativeName>
        <fullName evidence="1">Glutamyl-gamma-semialdehyde dehydrogenase</fullName>
        <shortName evidence="1">GSA dehydrogenase</shortName>
    </alternativeName>
</protein>
<sequence>MNLEHMGKAAQEAAFELATVATAQKNQALAIIADELEANKDAILAANAKDINAARESGMTDALIDRLLLNEERLTGIANDVRNVISLNDPVGAELDSRVLENGMRLSRRRVPLGVVGVIYEARPNVTIDIAALCLKTGNASILRGGRETFHSNVELVKVIQVALKKADLPAASVQYIEKPDRELVSQLLRLDQYVDMIIPRGGAGLHKMCKENSTIPVIIGGFGISHIYVDHSADISRSIDVVENAKAQRPSACNALDTLLVSEKVAETFLPRLAERLNKSNVEFVADDAAYSFLEGKAATLRHAADGDFDTEWLSFTLGVKVVADVAEAIAHMRKHNASHSDAILTNDIQSAERFVNAAGSAAVYVNASTRFTDGAQFGLGAEVAVSTQKLHARGPMGLEELTSYKWVGQADYLVRP</sequence>
<proteinExistence type="inferred from homology"/>
<name>PROA_PHOPR</name>
<evidence type="ECO:0000255" key="1">
    <source>
        <dbReference type="HAMAP-Rule" id="MF_00412"/>
    </source>
</evidence>
<keyword id="KW-0028">Amino-acid biosynthesis</keyword>
<keyword id="KW-0963">Cytoplasm</keyword>
<keyword id="KW-0521">NADP</keyword>
<keyword id="KW-0560">Oxidoreductase</keyword>
<keyword id="KW-0641">Proline biosynthesis</keyword>
<keyword id="KW-1185">Reference proteome</keyword>
<gene>
    <name evidence="1" type="primary">proA</name>
    <name type="ordered locus">PBPRA0840</name>
</gene>
<comment type="function">
    <text evidence="1">Catalyzes the NADPH-dependent reduction of L-glutamate 5-phosphate into L-glutamate 5-semialdehyde and phosphate. The product spontaneously undergoes cyclization to form 1-pyrroline-5-carboxylate.</text>
</comment>
<comment type="catalytic activity">
    <reaction evidence="1">
        <text>L-glutamate 5-semialdehyde + phosphate + NADP(+) = L-glutamyl 5-phosphate + NADPH + H(+)</text>
        <dbReference type="Rhea" id="RHEA:19541"/>
        <dbReference type="ChEBI" id="CHEBI:15378"/>
        <dbReference type="ChEBI" id="CHEBI:43474"/>
        <dbReference type="ChEBI" id="CHEBI:57783"/>
        <dbReference type="ChEBI" id="CHEBI:58066"/>
        <dbReference type="ChEBI" id="CHEBI:58274"/>
        <dbReference type="ChEBI" id="CHEBI:58349"/>
        <dbReference type="EC" id="1.2.1.41"/>
    </reaction>
</comment>
<comment type="pathway">
    <text evidence="1">Amino-acid biosynthesis; L-proline biosynthesis; L-glutamate 5-semialdehyde from L-glutamate: step 2/2.</text>
</comment>
<comment type="subcellular location">
    <subcellularLocation>
        <location evidence="1">Cytoplasm</location>
    </subcellularLocation>
</comment>
<comment type="similarity">
    <text evidence="1">Belongs to the gamma-glutamyl phosphate reductase family.</text>
</comment>
<accession>Q6LTX2</accession>